<feature type="chain" id="PRO_0000121523" description="Dihydroxyacetone kinase 2">
    <location>
        <begin position="1"/>
        <end position="591"/>
    </location>
</feature>
<feature type="domain" description="DhaK" evidence="3">
    <location>
        <begin position="8"/>
        <end position="344"/>
    </location>
</feature>
<feature type="domain" description="DhaL" evidence="2">
    <location>
        <begin position="384"/>
        <end position="587"/>
    </location>
</feature>
<feature type="region of interest" description="Disordered" evidence="4">
    <location>
        <begin position="40"/>
        <end position="59"/>
    </location>
</feature>
<feature type="active site" description="Tele-hemiaminal-histidine intermediate" evidence="3">
    <location>
        <position position="223"/>
    </location>
</feature>
<feature type="binding site" evidence="1">
    <location>
        <begin position="58"/>
        <end position="61"/>
    </location>
    <ligand>
        <name>substrate</name>
    </ligand>
</feature>
<feature type="binding site" evidence="1">
    <location>
        <position position="109"/>
    </location>
    <ligand>
        <name>substrate</name>
    </ligand>
</feature>
<feature type="binding site" evidence="1">
    <location>
        <position position="114"/>
    </location>
    <ligand>
        <name>substrate</name>
    </ligand>
</feature>
<feature type="binding site" evidence="1">
    <location>
        <begin position="413"/>
        <end position="416"/>
    </location>
    <ligand>
        <name>ATP</name>
        <dbReference type="ChEBI" id="CHEBI:30616"/>
    </ligand>
</feature>
<feature type="binding site" evidence="1">
    <location>
        <begin position="459"/>
        <end position="460"/>
    </location>
    <ligand>
        <name>ATP</name>
        <dbReference type="ChEBI" id="CHEBI:30616"/>
    </ligand>
</feature>
<feature type="binding site" evidence="1">
    <location>
        <begin position="511"/>
        <end position="512"/>
    </location>
    <ligand>
        <name>ATP</name>
        <dbReference type="ChEBI" id="CHEBI:30616"/>
    </ligand>
</feature>
<feature type="binding site" evidence="1">
    <location>
        <begin position="572"/>
        <end position="574"/>
    </location>
    <ligand>
        <name>ATP</name>
        <dbReference type="ChEBI" id="CHEBI:30616"/>
    </ligand>
</feature>
<comment type="function">
    <text evidence="1">Catalyzes both the phosphorylation of dihydroxyacetone and of glyceraldehyde.</text>
</comment>
<comment type="catalytic activity">
    <reaction>
        <text>dihydroxyacetone + ATP = dihydroxyacetone phosphate + ADP + H(+)</text>
        <dbReference type="Rhea" id="RHEA:15773"/>
        <dbReference type="ChEBI" id="CHEBI:15378"/>
        <dbReference type="ChEBI" id="CHEBI:16016"/>
        <dbReference type="ChEBI" id="CHEBI:30616"/>
        <dbReference type="ChEBI" id="CHEBI:57642"/>
        <dbReference type="ChEBI" id="CHEBI:456216"/>
        <dbReference type="EC" id="2.7.1.29"/>
    </reaction>
</comment>
<comment type="catalytic activity">
    <reaction>
        <text>D-glyceraldehyde + ATP = D-glyceraldehyde 3-phosphate + ADP + H(+)</text>
        <dbReference type="Rhea" id="RHEA:13941"/>
        <dbReference type="ChEBI" id="CHEBI:15378"/>
        <dbReference type="ChEBI" id="CHEBI:17378"/>
        <dbReference type="ChEBI" id="CHEBI:30616"/>
        <dbReference type="ChEBI" id="CHEBI:59776"/>
        <dbReference type="ChEBI" id="CHEBI:456216"/>
        <dbReference type="EC" id="2.7.1.28"/>
    </reaction>
</comment>
<comment type="pathway">
    <text>Polyol metabolism; glycerol fermentation; glycerone phosphate from glycerol (oxidative route): step 2/2.</text>
</comment>
<comment type="similarity">
    <text evidence="5">Belongs to the dihydroxyacetone kinase (DAK) family.</text>
</comment>
<dbReference type="EC" id="2.7.1.28"/>
<dbReference type="EC" id="2.7.1.29"/>
<dbReference type="EMBL" id="D50617">
    <property type="protein sequence ID" value="BAA09188.1"/>
    <property type="molecule type" value="Genomic_DNA"/>
</dbReference>
<dbReference type="EMBL" id="BK006940">
    <property type="protein sequence ID" value="DAA12387.1"/>
    <property type="molecule type" value="Genomic_DNA"/>
</dbReference>
<dbReference type="PIR" id="S56202">
    <property type="entry name" value="S56202"/>
</dbReference>
<dbReference type="RefSeq" id="NP_116602.1">
    <property type="nucleotide sequence ID" value="NM_001179914.1"/>
</dbReference>
<dbReference type="SMR" id="P43550"/>
<dbReference type="BioGRID" id="31094">
    <property type="interactions" value="41"/>
</dbReference>
<dbReference type="DIP" id="DIP-6539N"/>
<dbReference type="FunCoup" id="P43550">
    <property type="interactions" value="522"/>
</dbReference>
<dbReference type="IntAct" id="P43550">
    <property type="interactions" value="2"/>
</dbReference>
<dbReference type="MINT" id="P43550"/>
<dbReference type="STRING" id="4932.YFL053W"/>
<dbReference type="iPTMnet" id="P43550"/>
<dbReference type="PaxDb" id="4932-YFL053W"/>
<dbReference type="PeptideAtlas" id="P43550"/>
<dbReference type="EnsemblFungi" id="YFL053W_mRNA">
    <property type="protein sequence ID" value="YFL053W"/>
    <property type="gene ID" value="YFL053W"/>
</dbReference>
<dbReference type="GeneID" id="850491"/>
<dbReference type="KEGG" id="sce:YFL053W"/>
<dbReference type="AGR" id="SGD:S000001841"/>
<dbReference type="SGD" id="S000001841">
    <property type="gene designation" value="DAK2"/>
</dbReference>
<dbReference type="VEuPathDB" id="FungiDB:YFL053W"/>
<dbReference type="eggNOG" id="KOG2426">
    <property type="taxonomic scope" value="Eukaryota"/>
</dbReference>
<dbReference type="GeneTree" id="ENSGT00390000015415"/>
<dbReference type="HOGENOM" id="CLU_017054_6_0_1"/>
<dbReference type="InParanoid" id="P43550"/>
<dbReference type="OMA" id="CGLCLKT"/>
<dbReference type="OrthoDB" id="1724672at2759"/>
<dbReference type="BioCyc" id="MetaCyc:YFL053W-MONOMER"/>
<dbReference type="BioCyc" id="YEAST:YFL053W-MONOMER"/>
<dbReference type="BRENDA" id="2.7.1.29">
    <property type="organism ID" value="984"/>
</dbReference>
<dbReference type="UniPathway" id="UPA00617">
    <property type="reaction ID" value="UER00669"/>
</dbReference>
<dbReference type="BioGRID-ORCS" id="850491">
    <property type="hits" value="0 hits in 10 CRISPR screens"/>
</dbReference>
<dbReference type="PRO" id="PR:P43550"/>
<dbReference type="Proteomes" id="UP000002311">
    <property type="component" value="Chromosome VI"/>
</dbReference>
<dbReference type="RNAct" id="P43550">
    <property type="molecule type" value="protein"/>
</dbReference>
<dbReference type="GO" id="GO:0005829">
    <property type="term" value="C:cytosol"/>
    <property type="evidence" value="ECO:0000318"/>
    <property type="project" value="GO_Central"/>
</dbReference>
<dbReference type="GO" id="GO:0005524">
    <property type="term" value="F:ATP binding"/>
    <property type="evidence" value="ECO:0007669"/>
    <property type="project" value="UniProtKB-KW"/>
</dbReference>
<dbReference type="GO" id="GO:0004371">
    <property type="term" value="F:glycerone kinase activity"/>
    <property type="evidence" value="ECO:0000315"/>
    <property type="project" value="SGD"/>
</dbReference>
<dbReference type="GO" id="GO:0050354">
    <property type="term" value="F:triokinase activity"/>
    <property type="evidence" value="ECO:0007669"/>
    <property type="project" value="UniProtKB-EC"/>
</dbReference>
<dbReference type="GO" id="GO:0019588">
    <property type="term" value="P:anaerobic glycerol catabolic process"/>
    <property type="evidence" value="ECO:0007669"/>
    <property type="project" value="UniProtKB-UniPathway"/>
</dbReference>
<dbReference type="GO" id="GO:0019563">
    <property type="term" value="P:glycerol catabolic process"/>
    <property type="evidence" value="ECO:0000318"/>
    <property type="project" value="GO_Central"/>
</dbReference>
<dbReference type="GO" id="GO:0061610">
    <property type="term" value="P:glycerol to glycerone phosphate metabolic process"/>
    <property type="evidence" value="ECO:0000316"/>
    <property type="project" value="SGD"/>
</dbReference>
<dbReference type="FunFam" id="3.40.50.10440:FF:000002">
    <property type="entry name" value="Dihydroxyacetone kinase"/>
    <property type="match status" value="1"/>
</dbReference>
<dbReference type="FunFam" id="1.25.40.340:FF:000001">
    <property type="entry name" value="Dihydroxyacetone kinase 1"/>
    <property type="match status" value="1"/>
</dbReference>
<dbReference type="FunFam" id="3.30.1180.20:FF:000001">
    <property type="entry name" value="Dihydroxyacetone kinase 1"/>
    <property type="match status" value="1"/>
</dbReference>
<dbReference type="Gene3D" id="1.25.40.340">
    <property type="match status" value="1"/>
</dbReference>
<dbReference type="Gene3D" id="3.40.50.10440">
    <property type="entry name" value="Dihydroxyacetone kinase, domain 1"/>
    <property type="match status" value="1"/>
</dbReference>
<dbReference type="Gene3D" id="3.30.1180.20">
    <property type="entry name" value="Dihydroxyacetone kinase, domain 2"/>
    <property type="match status" value="1"/>
</dbReference>
<dbReference type="InterPro" id="IPR012734">
    <property type="entry name" value="DhaK_ATP"/>
</dbReference>
<dbReference type="InterPro" id="IPR004006">
    <property type="entry name" value="DhaK_dom"/>
</dbReference>
<dbReference type="InterPro" id="IPR004007">
    <property type="entry name" value="DhaL_dom"/>
</dbReference>
<dbReference type="InterPro" id="IPR036117">
    <property type="entry name" value="DhaL_dom_sf"/>
</dbReference>
<dbReference type="InterPro" id="IPR050861">
    <property type="entry name" value="Dihydroxyacetone_Kinase"/>
</dbReference>
<dbReference type="NCBIfam" id="TIGR02361">
    <property type="entry name" value="dak_ATP"/>
    <property type="match status" value="1"/>
</dbReference>
<dbReference type="PANTHER" id="PTHR28629">
    <property type="entry name" value="TRIOKINASE/FMN CYCLASE"/>
    <property type="match status" value="1"/>
</dbReference>
<dbReference type="PANTHER" id="PTHR28629:SF4">
    <property type="entry name" value="TRIOKINASE_FMN CYCLASE"/>
    <property type="match status" value="1"/>
</dbReference>
<dbReference type="Pfam" id="PF02733">
    <property type="entry name" value="Dak1"/>
    <property type="match status" value="1"/>
</dbReference>
<dbReference type="Pfam" id="PF02734">
    <property type="entry name" value="Dak2"/>
    <property type="match status" value="1"/>
</dbReference>
<dbReference type="SMART" id="SM01120">
    <property type="entry name" value="Dak2"/>
    <property type="match status" value="1"/>
</dbReference>
<dbReference type="SUPFAM" id="SSF82549">
    <property type="entry name" value="DAK1/DegV-like"/>
    <property type="match status" value="1"/>
</dbReference>
<dbReference type="SUPFAM" id="SSF101473">
    <property type="entry name" value="DhaL-like"/>
    <property type="match status" value="1"/>
</dbReference>
<dbReference type="PROSITE" id="PS51481">
    <property type="entry name" value="DHAK"/>
    <property type="match status" value="1"/>
</dbReference>
<dbReference type="PROSITE" id="PS51480">
    <property type="entry name" value="DHAL"/>
    <property type="match status" value="1"/>
</dbReference>
<name>DAK2_YEAST</name>
<keyword id="KW-0067">ATP-binding</keyword>
<keyword id="KW-0319">Glycerol metabolism</keyword>
<keyword id="KW-0418">Kinase</keyword>
<keyword id="KW-0547">Nucleotide-binding</keyword>
<keyword id="KW-1185">Reference proteome</keyword>
<keyword id="KW-0808">Transferase</keyword>
<proteinExistence type="inferred from homology"/>
<sequence>MSHKQFKSDGNIVTPYLLGLARSNPGLTVIKHDRVVFRTASAPNSGNPPKVSLVSGGGSGHEPTHAGFVGEGALDAIAAGAIFASPSTKQIYSAIKAVESPKGTLIIVKNYTGDIIHFGLAAERAKAAGMKVELVAVGDDVSVGKKKGSLVGRRGLGATVLVHKIAGAAASHGLELAEVAEVAQSVVDNSVTIAASLDHCTVPGHKPEAILGENEYEIGMGIHNESGTYKSSPLPSISELVSQMLPLLLDEDEDRSYVKFEPKEDVVLMVNNMGGMSNLELGYAAEVISEQLIDKYQIVPKRTITGAFITALNGPGFGITLMNASKAGGDILKYFDYPTTASGWNQMYHSAKDWEVLAKGQVPTAPSLKTLRNEKGSGVKADYDTFAKILLAGIAKINEVEPKVTWYDTIAGDGDCGTTLVSGGEALEEAIKNHTLRLEDAALGIEDIAYMVEDSMGGTSGGLYSIYLSALAQGVRDSGDKELTAETFKKASNVALDALYKYTRARPGYRTLIDALQPFVEALKAGKGPRAAAQAAYDGAEKTRKMDALVGRASYVAKEELRKLDSEGGLPDPGAVGLAALLDGFVTAAGY</sequence>
<organism>
    <name type="scientific">Saccharomyces cerevisiae (strain ATCC 204508 / S288c)</name>
    <name type="common">Baker's yeast</name>
    <dbReference type="NCBI Taxonomy" id="559292"/>
    <lineage>
        <taxon>Eukaryota</taxon>
        <taxon>Fungi</taxon>
        <taxon>Dikarya</taxon>
        <taxon>Ascomycota</taxon>
        <taxon>Saccharomycotina</taxon>
        <taxon>Saccharomycetes</taxon>
        <taxon>Saccharomycetales</taxon>
        <taxon>Saccharomycetaceae</taxon>
        <taxon>Saccharomyces</taxon>
    </lineage>
</organism>
<reference key="1">
    <citation type="journal article" date="1995" name="Nat. Genet.">
        <title>Analysis of the nucleotide sequence of chromosome VI from Saccharomyces cerevisiae.</title>
        <authorList>
            <person name="Murakami Y."/>
            <person name="Naitou M."/>
            <person name="Hagiwara H."/>
            <person name="Shibata T."/>
            <person name="Ozawa M."/>
            <person name="Sasanuma S."/>
            <person name="Sasanuma M."/>
            <person name="Tsuchiya Y."/>
            <person name="Soeda E."/>
            <person name="Yokoyama K."/>
            <person name="Yamazaki M."/>
            <person name="Tashiro H."/>
            <person name="Eki T."/>
        </authorList>
    </citation>
    <scope>NUCLEOTIDE SEQUENCE [LARGE SCALE GENOMIC DNA]</scope>
    <source>
        <strain>ATCC 204508 / S288c</strain>
    </source>
</reference>
<reference key="2">
    <citation type="journal article" date="2014" name="G3 (Bethesda)">
        <title>The reference genome sequence of Saccharomyces cerevisiae: Then and now.</title>
        <authorList>
            <person name="Engel S.R."/>
            <person name="Dietrich F.S."/>
            <person name="Fisk D.G."/>
            <person name="Binkley G."/>
            <person name="Balakrishnan R."/>
            <person name="Costanzo M.C."/>
            <person name="Dwight S.S."/>
            <person name="Hitz B.C."/>
            <person name="Karra K."/>
            <person name="Nash R.S."/>
            <person name="Weng S."/>
            <person name="Wong E.D."/>
            <person name="Lloyd P."/>
            <person name="Skrzypek M.S."/>
            <person name="Miyasato S.R."/>
            <person name="Simison M."/>
            <person name="Cherry J.M."/>
        </authorList>
    </citation>
    <scope>GENOME REANNOTATION</scope>
    <source>
        <strain>ATCC 204508 / S288c</strain>
    </source>
</reference>
<protein>
    <recommendedName>
        <fullName>Dihydroxyacetone kinase 2</fullName>
        <shortName>DHA kinase 2</shortName>
        <ecNumber>2.7.1.28</ecNumber>
        <ecNumber>2.7.1.29</ecNumber>
    </recommendedName>
    <alternativeName>
        <fullName>Glycerone kinase 2</fullName>
    </alternativeName>
    <alternativeName>
        <fullName>Triokinase 2</fullName>
    </alternativeName>
    <alternativeName>
        <fullName>Triose kinase 2</fullName>
    </alternativeName>
</protein>
<accession>P43550</accession>
<accession>D6VTH7</accession>
<gene>
    <name type="primary">DAK2</name>
    <name type="ordered locus">YFL053W</name>
</gene>
<evidence type="ECO:0000250" key="1"/>
<evidence type="ECO:0000255" key="2">
    <source>
        <dbReference type="PROSITE-ProRule" id="PRU00813"/>
    </source>
</evidence>
<evidence type="ECO:0000255" key="3">
    <source>
        <dbReference type="PROSITE-ProRule" id="PRU00814"/>
    </source>
</evidence>
<evidence type="ECO:0000256" key="4">
    <source>
        <dbReference type="SAM" id="MobiDB-lite"/>
    </source>
</evidence>
<evidence type="ECO:0000305" key="5"/>